<name>PSBN_BUTUM</name>
<gene>
    <name evidence="1" type="primary">psbN</name>
</gene>
<evidence type="ECO:0000255" key="1">
    <source>
        <dbReference type="HAMAP-Rule" id="MF_00293"/>
    </source>
</evidence>
<dbReference type="EMBL" id="AY147499">
    <property type="protein sequence ID" value="AAN32103.1"/>
    <property type="molecule type" value="Genomic_DNA"/>
</dbReference>
<dbReference type="RefSeq" id="YP_009972083.1">
    <property type="nucleotide sequence ID" value="NC_051949.1"/>
</dbReference>
<dbReference type="SMR" id="Q67IA0"/>
<dbReference type="GeneID" id="60456611"/>
<dbReference type="GO" id="GO:0009535">
    <property type="term" value="C:chloroplast thylakoid membrane"/>
    <property type="evidence" value="ECO:0007669"/>
    <property type="project" value="UniProtKB-SubCell"/>
</dbReference>
<dbReference type="GO" id="GO:0015979">
    <property type="term" value="P:photosynthesis"/>
    <property type="evidence" value="ECO:0007669"/>
    <property type="project" value="InterPro"/>
</dbReference>
<dbReference type="HAMAP" id="MF_00293">
    <property type="entry name" value="PSII_PsbN"/>
    <property type="match status" value="1"/>
</dbReference>
<dbReference type="InterPro" id="IPR003398">
    <property type="entry name" value="PSII_PsbN"/>
</dbReference>
<dbReference type="PANTHER" id="PTHR35326">
    <property type="entry name" value="PROTEIN PSBN"/>
    <property type="match status" value="1"/>
</dbReference>
<dbReference type="PANTHER" id="PTHR35326:SF3">
    <property type="entry name" value="PROTEIN PSBN"/>
    <property type="match status" value="1"/>
</dbReference>
<dbReference type="Pfam" id="PF02468">
    <property type="entry name" value="PsbN"/>
    <property type="match status" value="1"/>
</dbReference>
<protein>
    <recommendedName>
        <fullName evidence="1">Protein PsbN</fullName>
    </recommendedName>
</protein>
<feature type="chain" id="PRO_0000207875" description="Protein PsbN">
    <location>
        <begin position="1"/>
        <end position="43"/>
    </location>
</feature>
<feature type="transmembrane region" description="Helical" evidence="1">
    <location>
        <begin position="5"/>
        <end position="27"/>
    </location>
</feature>
<comment type="function">
    <text evidence="1">May play a role in photosystem I and II biogenesis.</text>
</comment>
<comment type="subcellular location">
    <subcellularLocation>
        <location evidence="1">Plastid</location>
        <location evidence="1">Chloroplast thylakoid membrane</location>
        <topology evidence="1">Single-pass membrane protein</topology>
    </subcellularLocation>
</comment>
<comment type="similarity">
    <text evidence="1">Belongs to the PsbN family.</text>
</comment>
<comment type="caution">
    <text evidence="1">Originally thought to be a component of PSII; based on experiments in Synechocystis, N.tabacum and barley, and its absence from PSII in T.elongatus and T.vulcanus, this is probably not true.</text>
</comment>
<sequence>METATLVAISISGLLVSFTGYALYTAFGQPSQQLRDPFEEHGD</sequence>
<reference key="1">
    <citation type="submission" date="2002-09" db="EMBL/GenBank/DDBJ databases">
        <title>Phylogenetic relationships among the major lineages of Asparagales based on a large chloroplast data set.</title>
        <authorList>
            <person name="McPherson M.A."/>
            <person name="Rai H.S."/>
            <person name="Wong W.A."/>
            <person name="Graham S.W."/>
        </authorList>
    </citation>
    <scope>NUCLEOTIDE SEQUENCE [GENOMIC DNA]</scope>
</reference>
<proteinExistence type="inferred from homology"/>
<organism>
    <name type="scientific">Butomus umbellatus</name>
    <name type="common">Flowering rush</name>
    <dbReference type="NCBI Taxonomy" id="50236"/>
    <lineage>
        <taxon>Eukaryota</taxon>
        <taxon>Viridiplantae</taxon>
        <taxon>Streptophyta</taxon>
        <taxon>Embryophyta</taxon>
        <taxon>Tracheophyta</taxon>
        <taxon>Spermatophyta</taxon>
        <taxon>Magnoliopsida</taxon>
        <taxon>Liliopsida</taxon>
        <taxon>Butomaceae</taxon>
        <taxon>Butomus</taxon>
    </lineage>
</organism>
<keyword id="KW-0150">Chloroplast</keyword>
<keyword id="KW-0472">Membrane</keyword>
<keyword id="KW-0934">Plastid</keyword>
<keyword id="KW-0793">Thylakoid</keyword>
<keyword id="KW-0812">Transmembrane</keyword>
<keyword id="KW-1133">Transmembrane helix</keyword>
<accession>Q67IA0</accession>
<geneLocation type="chloroplast"/>